<sequence length="631" mass="72353">MKSNTESLAWENLRYDLHSWIKEAISSMGYPTMTPVQASTIPLLSGNKDVVVEAVTGSGKTLSFVIPVLQKISDRLYKPDSDGDLPEPVKRGHMLSIVLSPTRELANQIQSVFNQVLQYLPEDKGTRINTQLLVGSIGNVREDLNQFLTNQPQILIGTPGRILEFLGSSQSIKTSSLEIVILDEADKLLDFSFEKDVINILKKLPKQRRTGLFSATISSAGNTIFRTGMNNPVKVQVKSKNYFGEQSNSPKSLQLSYMMINPELKITTLLTILSKYQYKKAIVYFPTCTSVKHFYQIFNKVYQQESSDEPLKFFSLHGQLNTKSRLKTLDNFTQGDINLYKHILMTTDVAARGIDIPDVDLVIQIDPPTDPNVFLHRCGRTGRANKVGRAIVMLNDNCQEEDYIGFMEVKGIFLTKQDIPTSSATKNLHENFQIKLRQYMLEDRARHELAVKSYVGFIRYYSKHIASSIFRLATLDYLGIAKMYGLLRLPKMPETKYIDNSIMPTDGWLGEIIDMDKYSYADKLQEKTRLENLENDKLKKIQDAKRRKELKIKNEAWSSKSERKENKLDRKEKLKRKREAIEKQIMEEERLNDGGNKDEEDEVVEDWKDMVRKNKKKQKKNNSIQGSFDDL</sequence>
<dbReference type="EC" id="3.6.4.13" evidence="1"/>
<dbReference type="EMBL" id="CP017627">
    <property type="protein sequence ID" value="AOW29593.1"/>
    <property type="molecule type" value="Genomic_DNA"/>
</dbReference>
<dbReference type="RefSeq" id="XP_711358.2">
    <property type="nucleotide sequence ID" value="XM_706266.2"/>
</dbReference>
<dbReference type="SMR" id="Q59N29"/>
<dbReference type="FunCoup" id="Q59N29">
    <property type="interactions" value="1237"/>
</dbReference>
<dbReference type="STRING" id="237561.Q59N29"/>
<dbReference type="EnsemblFungi" id="C5_01600C_A-T">
    <property type="protein sequence ID" value="C5_01600C_A-T-p1"/>
    <property type="gene ID" value="C5_01600C_A"/>
</dbReference>
<dbReference type="GeneID" id="3647252"/>
<dbReference type="KEGG" id="cal:CAALFM_C501600CA"/>
<dbReference type="CGD" id="CAL0000185825">
    <property type="gene designation" value="SPB4"/>
</dbReference>
<dbReference type="VEuPathDB" id="FungiDB:C5_01600C_A"/>
<dbReference type="eggNOG" id="KOG0345">
    <property type="taxonomic scope" value="Eukaryota"/>
</dbReference>
<dbReference type="HOGENOM" id="CLU_003041_26_4_1"/>
<dbReference type="InParanoid" id="Q59N29"/>
<dbReference type="OMA" id="AYKEHEC"/>
<dbReference type="OrthoDB" id="7396459at2759"/>
<dbReference type="PRO" id="PR:Q59N29"/>
<dbReference type="Proteomes" id="UP000000559">
    <property type="component" value="Chromosome 5"/>
</dbReference>
<dbReference type="GO" id="GO:0030686">
    <property type="term" value="C:90S preribosome"/>
    <property type="evidence" value="ECO:0007669"/>
    <property type="project" value="EnsemblFungi"/>
</dbReference>
<dbReference type="GO" id="GO:0005730">
    <property type="term" value="C:nucleolus"/>
    <property type="evidence" value="ECO:0000318"/>
    <property type="project" value="GO_Central"/>
</dbReference>
<dbReference type="GO" id="GO:0005654">
    <property type="term" value="C:nucleoplasm"/>
    <property type="evidence" value="ECO:0007669"/>
    <property type="project" value="EnsemblFungi"/>
</dbReference>
<dbReference type="GO" id="GO:0030687">
    <property type="term" value="C:preribosome, large subunit precursor"/>
    <property type="evidence" value="ECO:0007669"/>
    <property type="project" value="EnsemblFungi"/>
</dbReference>
<dbReference type="GO" id="GO:0005524">
    <property type="term" value="F:ATP binding"/>
    <property type="evidence" value="ECO:0007669"/>
    <property type="project" value="UniProtKB-KW"/>
</dbReference>
<dbReference type="GO" id="GO:0016887">
    <property type="term" value="F:ATP hydrolysis activity"/>
    <property type="evidence" value="ECO:0007669"/>
    <property type="project" value="RHEA"/>
</dbReference>
<dbReference type="GO" id="GO:0003723">
    <property type="term" value="F:RNA binding"/>
    <property type="evidence" value="ECO:0007669"/>
    <property type="project" value="UniProtKB-KW"/>
</dbReference>
<dbReference type="GO" id="GO:0003724">
    <property type="term" value="F:RNA helicase activity"/>
    <property type="evidence" value="ECO:0007669"/>
    <property type="project" value="UniProtKB-EC"/>
</dbReference>
<dbReference type="GO" id="GO:1902626">
    <property type="term" value="P:assembly of large subunit precursor of preribosome"/>
    <property type="evidence" value="ECO:0007669"/>
    <property type="project" value="EnsemblFungi"/>
</dbReference>
<dbReference type="GO" id="GO:0000470">
    <property type="term" value="P:maturation of LSU-rRNA"/>
    <property type="evidence" value="ECO:0007669"/>
    <property type="project" value="EnsemblFungi"/>
</dbReference>
<dbReference type="CDD" id="cd17960">
    <property type="entry name" value="DEADc_DDX55"/>
    <property type="match status" value="1"/>
</dbReference>
<dbReference type="CDD" id="cd18787">
    <property type="entry name" value="SF2_C_DEAD"/>
    <property type="match status" value="1"/>
</dbReference>
<dbReference type="Gene3D" id="3.40.50.300">
    <property type="entry name" value="P-loop containing nucleotide triphosphate hydrolases"/>
    <property type="match status" value="2"/>
</dbReference>
<dbReference type="InterPro" id="IPR056330">
    <property type="entry name" value="CTT_SPB4"/>
</dbReference>
<dbReference type="InterPro" id="IPR011545">
    <property type="entry name" value="DEAD/DEAH_box_helicase_dom"/>
</dbReference>
<dbReference type="InterPro" id="IPR014001">
    <property type="entry name" value="Helicase_ATP-bd"/>
</dbReference>
<dbReference type="InterPro" id="IPR001650">
    <property type="entry name" value="Helicase_C-like"/>
</dbReference>
<dbReference type="InterPro" id="IPR027417">
    <property type="entry name" value="P-loop_NTPase"/>
</dbReference>
<dbReference type="InterPro" id="IPR000629">
    <property type="entry name" value="RNA-helicase_DEAD-box_CS"/>
</dbReference>
<dbReference type="InterPro" id="IPR014014">
    <property type="entry name" value="RNA_helicase_DEAD_Q_motif"/>
</dbReference>
<dbReference type="InterPro" id="IPR025313">
    <property type="entry name" value="SPB4-like_CTE"/>
</dbReference>
<dbReference type="PANTHER" id="PTHR24031">
    <property type="entry name" value="RNA HELICASE"/>
    <property type="match status" value="1"/>
</dbReference>
<dbReference type="Pfam" id="PF13959">
    <property type="entry name" value="CTE_SPB4"/>
    <property type="match status" value="1"/>
</dbReference>
<dbReference type="Pfam" id="PF23681">
    <property type="entry name" value="CTT_SPB4"/>
    <property type="match status" value="1"/>
</dbReference>
<dbReference type="Pfam" id="PF00270">
    <property type="entry name" value="DEAD"/>
    <property type="match status" value="1"/>
</dbReference>
<dbReference type="Pfam" id="PF00271">
    <property type="entry name" value="Helicase_C"/>
    <property type="match status" value="1"/>
</dbReference>
<dbReference type="SMART" id="SM00487">
    <property type="entry name" value="DEXDc"/>
    <property type="match status" value="1"/>
</dbReference>
<dbReference type="SMART" id="SM01178">
    <property type="entry name" value="DUF4217"/>
    <property type="match status" value="1"/>
</dbReference>
<dbReference type="SMART" id="SM00490">
    <property type="entry name" value="HELICc"/>
    <property type="match status" value="1"/>
</dbReference>
<dbReference type="SUPFAM" id="SSF52540">
    <property type="entry name" value="P-loop containing nucleoside triphosphate hydrolases"/>
    <property type="match status" value="1"/>
</dbReference>
<dbReference type="PROSITE" id="PS00039">
    <property type="entry name" value="DEAD_ATP_HELICASE"/>
    <property type="match status" value="1"/>
</dbReference>
<dbReference type="PROSITE" id="PS51192">
    <property type="entry name" value="HELICASE_ATP_BIND_1"/>
    <property type="match status" value="1"/>
</dbReference>
<dbReference type="PROSITE" id="PS51194">
    <property type="entry name" value="HELICASE_CTER"/>
    <property type="match status" value="1"/>
</dbReference>
<dbReference type="PROSITE" id="PS51195">
    <property type="entry name" value="Q_MOTIF"/>
    <property type="match status" value="1"/>
</dbReference>
<evidence type="ECO:0000250" key="1">
    <source>
        <dbReference type="UniProtKB" id="P25808"/>
    </source>
</evidence>
<evidence type="ECO:0000255" key="2"/>
<evidence type="ECO:0000255" key="3">
    <source>
        <dbReference type="PROSITE-ProRule" id="PRU00541"/>
    </source>
</evidence>
<evidence type="ECO:0000255" key="4">
    <source>
        <dbReference type="PROSITE-ProRule" id="PRU00542"/>
    </source>
</evidence>
<evidence type="ECO:0000256" key="5">
    <source>
        <dbReference type="SAM" id="MobiDB-lite"/>
    </source>
</evidence>
<evidence type="ECO:0000305" key="6"/>
<proteinExistence type="inferred from homology"/>
<comment type="function">
    <text evidence="1">ATP-binding RNA helicase involved in the biogenesis of 60S ribosomal subunits. Binds 90S pre-ribosomal particles and dissociates from pre-60S ribosomal particles after processing of 27SB pre-rRNA. Required for the normal formation of 18S rRNA through the processing of pre-rRNAs at sites A0, A1 and A2, and the normal formation of 25S and 5.8S rRNAs through the processing of pre-rRNAs at sites C1 and C2.</text>
</comment>
<comment type="catalytic activity">
    <reaction evidence="1">
        <text>ATP + H2O = ADP + phosphate + H(+)</text>
        <dbReference type="Rhea" id="RHEA:13065"/>
        <dbReference type="ChEBI" id="CHEBI:15377"/>
        <dbReference type="ChEBI" id="CHEBI:15378"/>
        <dbReference type="ChEBI" id="CHEBI:30616"/>
        <dbReference type="ChEBI" id="CHEBI:43474"/>
        <dbReference type="ChEBI" id="CHEBI:456216"/>
        <dbReference type="EC" id="3.6.4.13"/>
    </reaction>
</comment>
<comment type="subunit">
    <text evidence="1">Component of pre-60S ribosomal complexes.</text>
</comment>
<comment type="subcellular location">
    <subcellularLocation>
        <location evidence="1">Nucleus</location>
        <location evidence="1">Nucleolus</location>
    </subcellularLocation>
</comment>
<comment type="domain">
    <text>The Q motif is unique to and characteristic of the DEAD box family of RNA helicases and controls ATP binding and hydrolysis.</text>
</comment>
<comment type="similarity">
    <text evidence="6">Belongs to the DEAD box helicase family. DDX55/SPB4 subfamily.</text>
</comment>
<keyword id="KW-0067">ATP-binding</keyword>
<keyword id="KW-0175">Coiled coil</keyword>
<keyword id="KW-0347">Helicase</keyword>
<keyword id="KW-0378">Hydrolase</keyword>
<keyword id="KW-0547">Nucleotide-binding</keyword>
<keyword id="KW-0539">Nucleus</keyword>
<keyword id="KW-1185">Reference proteome</keyword>
<keyword id="KW-0690">Ribosome biogenesis</keyword>
<keyword id="KW-0694">RNA-binding</keyword>
<keyword id="KW-0698">rRNA processing</keyword>
<reference key="1">
    <citation type="journal article" date="2004" name="Proc. Natl. Acad. Sci. U.S.A.">
        <title>The diploid genome sequence of Candida albicans.</title>
        <authorList>
            <person name="Jones T."/>
            <person name="Federspiel N.A."/>
            <person name="Chibana H."/>
            <person name="Dungan J."/>
            <person name="Kalman S."/>
            <person name="Magee B.B."/>
            <person name="Newport G."/>
            <person name="Thorstenson Y.R."/>
            <person name="Agabian N."/>
            <person name="Magee P.T."/>
            <person name="Davis R.W."/>
            <person name="Scherer S."/>
        </authorList>
    </citation>
    <scope>NUCLEOTIDE SEQUENCE [LARGE SCALE GENOMIC DNA]</scope>
    <source>
        <strain>SC5314 / ATCC MYA-2876</strain>
    </source>
</reference>
<reference key="2">
    <citation type="journal article" date="2007" name="Genome Biol.">
        <title>Assembly of the Candida albicans genome into sixteen supercontigs aligned on the eight chromosomes.</title>
        <authorList>
            <person name="van het Hoog M."/>
            <person name="Rast T.J."/>
            <person name="Martchenko M."/>
            <person name="Grindle S."/>
            <person name="Dignard D."/>
            <person name="Hogues H."/>
            <person name="Cuomo C."/>
            <person name="Berriman M."/>
            <person name="Scherer S."/>
            <person name="Magee B.B."/>
            <person name="Whiteway M."/>
            <person name="Chibana H."/>
            <person name="Nantel A."/>
            <person name="Magee P.T."/>
        </authorList>
    </citation>
    <scope>GENOME REANNOTATION</scope>
    <source>
        <strain>SC5314 / ATCC MYA-2876</strain>
    </source>
</reference>
<reference key="3">
    <citation type="journal article" date="2013" name="Genome Biol.">
        <title>Assembly of a phased diploid Candida albicans genome facilitates allele-specific measurements and provides a simple model for repeat and indel structure.</title>
        <authorList>
            <person name="Muzzey D."/>
            <person name="Schwartz K."/>
            <person name="Weissman J.S."/>
            <person name="Sherlock G."/>
        </authorList>
    </citation>
    <scope>NUCLEOTIDE SEQUENCE [LARGE SCALE GENOMIC DNA]</scope>
    <scope>GENOME REANNOTATION</scope>
    <source>
        <strain>SC5314 / ATCC MYA-2876</strain>
    </source>
</reference>
<organism>
    <name type="scientific">Candida albicans (strain SC5314 / ATCC MYA-2876)</name>
    <name type="common">Yeast</name>
    <dbReference type="NCBI Taxonomy" id="237561"/>
    <lineage>
        <taxon>Eukaryota</taxon>
        <taxon>Fungi</taxon>
        <taxon>Dikarya</taxon>
        <taxon>Ascomycota</taxon>
        <taxon>Saccharomycotina</taxon>
        <taxon>Pichiomycetes</taxon>
        <taxon>Debaryomycetaceae</taxon>
        <taxon>Candida/Lodderomyces clade</taxon>
        <taxon>Candida</taxon>
    </lineage>
</organism>
<name>SPB4_CANAL</name>
<protein>
    <recommendedName>
        <fullName evidence="6">ATP-dependent rRNA helicase SPB4</fullName>
        <ecNumber evidence="1">3.6.4.13</ecNumber>
    </recommendedName>
</protein>
<feature type="chain" id="PRO_0000232323" description="ATP-dependent rRNA helicase SPB4">
    <location>
        <begin position="1"/>
        <end position="631"/>
    </location>
</feature>
<feature type="domain" description="Helicase ATP-binding" evidence="3">
    <location>
        <begin position="41"/>
        <end position="235"/>
    </location>
</feature>
<feature type="domain" description="Helicase C-terminal" evidence="4">
    <location>
        <begin position="265"/>
        <end position="429"/>
    </location>
</feature>
<feature type="region of interest" description="Disordered" evidence="5">
    <location>
        <begin position="583"/>
        <end position="631"/>
    </location>
</feature>
<feature type="coiled-coil region" evidence="2">
    <location>
        <begin position="525"/>
        <end position="594"/>
    </location>
</feature>
<feature type="short sequence motif" description="Q motif" evidence="6">
    <location>
        <begin position="10"/>
        <end position="38"/>
    </location>
</feature>
<feature type="short sequence motif" description="DEAD box" evidence="6">
    <location>
        <begin position="183"/>
        <end position="186"/>
    </location>
</feature>
<feature type="compositionally biased region" description="Basic and acidic residues" evidence="5">
    <location>
        <begin position="583"/>
        <end position="597"/>
    </location>
</feature>
<feature type="binding site" evidence="3">
    <location>
        <begin position="54"/>
        <end position="61"/>
    </location>
    <ligand>
        <name>ATP</name>
        <dbReference type="ChEBI" id="CHEBI:30616"/>
    </ligand>
</feature>
<accession>Q59N29</accession>
<accession>A0A1D8PNA5</accession>
<accession>Q59NP8</accession>
<gene>
    <name type="primary">SPB4</name>
    <name type="synonym">SPB41</name>
    <name type="synonym">SPB42</name>
    <name type="ordered locus">CAALFM_C501600CA</name>
    <name type="ORF">CaO19.11631</name>
    <name type="ORF">CaO19.13677</name>
    <name type="ORF">CaO19.4154</name>
    <name type="ORF">CaO19.6298</name>
</gene>